<protein>
    <recommendedName>
        <fullName evidence="1">Enolase</fullName>
        <ecNumber evidence="1">4.2.1.11</ecNumber>
    </recommendedName>
    <alternativeName>
        <fullName evidence="1">2-phospho-D-glycerate hydro-lyase</fullName>
    </alternativeName>
    <alternativeName>
        <fullName evidence="1">2-phosphoglycerate dehydratase</fullName>
    </alternativeName>
</protein>
<gene>
    <name evidence="1" type="primary">eno</name>
    <name type="ordered locus">Bcenmc03_2125</name>
</gene>
<reference key="1">
    <citation type="submission" date="2008-02" db="EMBL/GenBank/DDBJ databases">
        <title>Complete sequence of chromosome 1 of Burkholderia cenocepacia MC0-3.</title>
        <authorList>
            <person name="Copeland A."/>
            <person name="Lucas S."/>
            <person name="Lapidus A."/>
            <person name="Barry K."/>
            <person name="Bruce D."/>
            <person name="Goodwin L."/>
            <person name="Glavina del Rio T."/>
            <person name="Dalin E."/>
            <person name="Tice H."/>
            <person name="Pitluck S."/>
            <person name="Chain P."/>
            <person name="Malfatti S."/>
            <person name="Shin M."/>
            <person name="Vergez L."/>
            <person name="Schmutz J."/>
            <person name="Larimer F."/>
            <person name="Land M."/>
            <person name="Hauser L."/>
            <person name="Kyrpides N."/>
            <person name="Mikhailova N."/>
            <person name="Tiedje J."/>
            <person name="Richardson P."/>
        </authorList>
    </citation>
    <scope>NUCLEOTIDE SEQUENCE [LARGE SCALE GENOMIC DNA]</scope>
    <source>
        <strain>MC0-3</strain>
    </source>
</reference>
<organism>
    <name type="scientific">Burkholderia orbicola (strain MC0-3)</name>
    <dbReference type="NCBI Taxonomy" id="406425"/>
    <lineage>
        <taxon>Bacteria</taxon>
        <taxon>Pseudomonadati</taxon>
        <taxon>Pseudomonadota</taxon>
        <taxon>Betaproteobacteria</taxon>
        <taxon>Burkholderiales</taxon>
        <taxon>Burkholderiaceae</taxon>
        <taxon>Burkholderia</taxon>
        <taxon>Burkholderia cepacia complex</taxon>
        <taxon>Burkholderia orbicola</taxon>
    </lineage>
</organism>
<keyword id="KW-0963">Cytoplasm</keyword>
<keyword id="KW-0324">Glycolysis</keyword>
<keyword id="KW-0456">Lyase</keyword>
<keyword id="KW-0460">Magnesium</keyword>
<keyword id="KW-0479">Metal-binding</keyword>
<keyword id="KW-0964">Secreted</keyword>
<feature type="chain" id="PRO_1000115837" description="Enolase">
    <location>
        <begin position="1"/>
        <end position="427"/>
    </location>
</feature>
<feature type="active site" description="Proton donor" evidence="1">
    <location>
        <position position="205"/>
    </location>
</feature>
<feature type="active site" description="Proton acceptor" evidence="1">
    <location>
        <position position="337"/>
    </location>
</feature>
<feature type="binding site" evidence="1">
    <location>
        <position position="163"/>
    </location>
    <ligand>
        <name>(2R)-2-phosphoglycerate</name>
        <dbReference type="ChEBI" id="CHEBI:58289"/>
    </ligand>
</feature>
<feature type="binding site" evidence="1">
    <location>
        <position position="242"/>
    </location>
    <ligand>
        <name>Mg(2+)</name>
        <dbReference type="ChEBI" id="CHEBI:18420"/>
    </ligand>
</feature>
<feature type="binding site" evidence="1">
    <location>
        <position position="285"/>
    </location>
    <ligand>
        <name>Mg(2+)</name>
        <dbReference type="ChEBI" id="CHEBI:18420"/>
    </ligand>
</feature>
<feature type="binding site" evidence="1">
    <location>
        <position position="312"/>
    </location>
    <ligand>
        <name>Mg(2+)</name>
        <dbReference type="ChEBI" id="CHEBI:18420"/>
    </ligand>
</feature>
<feature type="binding site" evidence="1">
    <location>
        <position position="337"/>
    </location>
    <ligand>
        <name>(2R)-2-phosphoglycerate</name>
        <dbReference type="ChEBI" id="CHEBI:58289"/>
    </ligand>
</feature>
<feature type="binding site" evidence="1">
    <location>
        <position position="366"/>
    </location>
    <ligand>
        <name>(2R)-2-phosphoglycerate</name>
        <dbReference type="ChEBI" id="CHEBI:58289"/>
    </ligand>
</feature>
<feature type="binding site" evidence="1">
    <location>
        <position position="367"/>
    </location>
    <ligand>
        <name>(2R)-2-phosphoglycerate</name>
        <dbReference type="ChEBI" id="CHEBI:58289"/>
    </ligand>
</feature>
<feature type="binding site" evidence="1">
    <location>
        <position position="388"/>
    </location>
    <ligand>
        <name>(2R)-2-phosphoglycerate</name>
        <dbReference type="ChEBI" id="CHEBI:58289"/>
    </ligand>
</feature>
<proteinExistence type="inferred from homology"/>
<name>ENO_BURO0</name>
<accession>B1JUY6</accession>
<sequence length="427" mass="45687">MSAIVDIIGREILDSRGNPTVECDVLLESGTMGRAAVPSGASTGSREAIELRDGEAGRYNGKGVLKAVEHINTEISEAIMGLDASEQAFLDKTLLELDGTDNKSRLGANAMLAVSMAVAKAAAEEAGLPLYRYFGGSGAMQLPVPMMNIVNGGAHANNSLDIQEFMIVPVSQPTFREALRCGAEVFHALKKILSDRGMSTAVGDEGGFAPNFGSNDECLSTILQAIEKAGYRAGEDVLLALDCAASEFYHDGKYQLAGEGLQLSSAEFTDYLATLADKFPIVSIEDGMHESDWDGWKLLTDRLGKKVQLVGDDLFVTNTRILKEGIEKGIANSILIKINQIGTLTETFAAIEMAKRAGYTAVISHRSGETEDSTIADIAVGLNAGQIKTGSLSRSDRISKYNQLLRIEEDLGDIASYPGKSAFYNLR</sequence>
<dbReference type="EC" id="4.2.1.11" evidence="1"/>
<dbReference type="EMBL" id="CP000958">
    <property type="protein sequence ID" value="ACA91286.1"/>
    <property type="molecule type" value="Genomic_DNA"/>
</dbReference>
<dbReference type="RefSeq" id="WP_006478406.1">
    <property type="nucleotide sequence ID" value="NC_010508.1"/>
</dbReference>
<dbReference type="SMR" id="B1JUY6"/>
<dbReference type="GeneID" id="93128338"/>
<dbReference type="KEGG" id="bcm:Bcenmc03_2125"/>
<dbReference type="HOGENOM" id="CLU_031223_2_1_4"/>
<dbReference type="UniPathway" id="UPA00109">
    <property type="reaction ID" value="UER00187"/>
</dbReference>
<dbReference type="Proteomes" id="UP000002169">
    <property type="component" value="Chromosome 1"/>
</dbReference>
<dbReference type="GO" id="GO:0009986">
    <property type="term" value="C:cell surface"/>
    <property type="evidence" value="ECO:0007669"/>
    <property type="project" value="UniProtKB-SubCell"/>
</dbReference>
<dbReference type="GO" id="GO:0005576">
    <property type="term" value="C:extracellular region"/>
    <property type="evidence" value="ECO:0007669"/>
    <property type="project" value="UniProtKB-SubCell"/>
</dbReference>
<dbReference type="GO" id="GO:0000015">
    <property type="term" value="C:phosphopyruvate hydratase complex"/>
    <property type="evidence" value="ECO:0007669"/>
    <property type="project" value="InterPro"/>
</dbReference>
<dbReference type="GO" id="GO:0000287">
    <property type="term" value="F:magnesium ion binding"/>
    <property type="evidence" value="ECO:0007669"/>
    <property type="project" value="UniProtKB-UniRule"/>
</dbReference>
<dbReference type="GO" id="GO:0004634">
    <property type="term" value="F:phosphopyruvate hydratase activity"/>
    <property type="evidence" value="ECO:0007669"/>
    <property type="project" value="UniProtKB-UniRule"/>
</dbReference>
<dbReference type="GO" id="GO:0006096">
    <property type="term" value="P:glycolytic process"/>
    <property type="evidence" value="ECO:0007669"/>
    <property type="project" value="UniProtKB-UniRule"/>
</dbReference>
<dbReference type="CDD" id="cd03313">
    <property type="entry name" value="enolase"/>
    <property type="match status" value="1"/>
</dbReference>
<dbReference type="FunFam" id="3.20.20.120:FF:000001">
    <property type="entry name" value="Enolase"/>
    <property type="match status" value="1"/>
</dbReference>
<dbReference type="FunFam" id="3.30.390.10:FF:000001">
    <property type="entry name" value="Enolase"/>
    <property type="match status" value="1"/>
</dbReference>
<dbReference type="Gene3D" id="3.20.20.120">
    <property type="entry name" value="Enolase-like C-terminal domain"/>
    <property type="match status" value="1"/>
</dbReference>
<dbReference type="Gene3D" id="3.30.390.10">
    <property type="entry name" value="Enolase-like, N-terminal domain"/>
    <property type="match status" value="1"/>
</dbReference>
<dbReference type="HAMAP" id="MF_00318">
    <property type="entry name" value="Enolase"/>
    <property type="match status" value="1"/>
</dbReference>
<dbReference type="InterPro" id="IPR000941">
    <property type="entry name" value="Enolase"/>
</dbReference>
<dbReference type="InterPro" id="IPR036849">
    <property type="entry name" value="Enolase-like_C_sf"/>
</dbReference>
<dbReference type="InterPro" id="IPR029017">
    <property type="entry name" value="Enolase-like_N"/>
</dbReference>
<dbReference type="InterPro" id="IPR020810">
    <property type="entry name" value="Enolase_C"/>
</dbReference>
<dbReference type="InterPro" id="IPR020809">
    <property type="entry name" value="Enolase_CS"/>
</dbReference>
<dbReference type="InterPro" id="IPR020811">
    <property type="entry name" value="Enolase_N"/>
</dbReference>
<dbReference type="NCBIfam" id="TIGR01060">
    <property type="entry name" value="eno"/>
    <property type="match status" value="1"/>
</dbReference>
<dbReference type="PANTHER" id="PTHR11902">
    <property type="entry name" value="ENOLASE"/>
    <property type="match status" value="1"/>
</dbReference>
<dbReference type="PANTHER" id="PTHR11902:SF1">
    <property type="entry name" value="ENOLASE"/>
    <property type="match status" value="1"/>
</dbReference>
<dbReference type="Pfam" id="PF00113">
    <property type="entry name" value="Enolase_C"/>
    <property type="match status" value="1"/>
</dbReference>
<dbReference type="Pfam" id="PF03952">
    <property type="entry name" value="Enolase_N"/>
    <property type="match status" value="1"/>
</dbReference>
<dbReference type="PIRSF" id="PIRSF001400">
    <property type="entry name" value="Enolase"/>
    <property type="match status" value="1"/>
</dbReference>
<dbReference type="PRINTS" id="PR00148">
    <property type="entry name" value="ENOLASE"/>
</dbReference>
<dbReference type="SFLD" id="SFLDF00002">
    <property type="entry name" value="enolase"/>
    <property type="match status" value="1"/>
</dbReference>
<dbReference type="SFLD" id="SFLDG00178">
    <property type="entry name" value="enolase"/>
    <property type="match status" value="1"/>
</dbReference>
<dbReference type="SMART" id="SM01192">
    <property type="entry name" value="Enolase_C"/>
    <property type="match status" value="1"/>
</dbReference>
<dbReference type="SMART" id="SM01193">
    <property type="entry name" value="Enolase_N"/>
    <property type="match status" value="1"/>
</dbReference>
<dbReference type="SUPFAM" id="SSF51604">
    <property type="entry name" value="Enolase C-terminal domain-like"/>
    <property type="match status" value="1"/>
</dbReference>
<dbReference type="SUPFAM" id="SSF54826">
    <property type="entry name" value="Enolase N-terminal domain-like"/>
    <property type="match status" value="1"/>
</dbReference>
<dbReference type="PROSITE" id="PS00164">
    <property type="entry name" value="ENOLASE"/>
    <property type="match status" value="1"/>
</dbReference>
<evidence type="ECO:0000255" key="1">
    <source>
        <dbReference type="HAMAP-Rule" id="MF_00318"/>
    </source>
</evidence>
<comment type="function">
    <text evidence="1">Catalyzes the reversible conversion of 2-phosphoglycerate (2-PG) into phosphoenolpyruvate (PEP). It is essential for the degradation of carbohydrates via glycolysis.</text>
</comment>
<comment type="catalytic activity">
    <reaction evidence="1">
        <text>(2R)-2-phosphoglycerate = phosphoenolpyruvate + H2O</text>
        <dbReference type="Rhea" id="RHEA:10164"/>
        <dbReference type="ChEBI" id="CHEBI:15377"/>
        <dbReference type="ChEBI" id="CHEBI:58289"/>
        <dbReference type="ChEBI" id="CHEBI:58702"/>
        <dbReference type="EC" id="4.2.1.11"/>
    </reaction>
</comment>
<comment type="cofactor">
    <cofactor evidence="1">
        <name>Mg(2+)</name>
        <dbReference type="ChEBI" id="CHEBI:18420"/>
    </cofactor>
    <text evidence="1">Binds a second Mg(2+) ion via substrate during catalysis.</text>
</comment>
<comment type="pathway">
    <text evidence="1">Carbohydrate degradation; glycolysis; pyruvate from D-glyceraldehyde 3-phosphate: step 4/5.</text>
</comment>
<comment type="subcellular location">
    <subcellularLocation>
        <location evidence="1">Cytoplasm</location>
    </subcellularLocation>
    <subcellularLocation>
        <location evidence="1">Secreted</location>
    </subcellularLocation>
    <subcellularLocation>
        <location evidence="1">Cell surface</location>
    </subcellularLocation>
    <text evidence="1">Fractions of enolase are present in both the cytoplasm and on the cell surface.</text>
</comment>
<comment type="similarity">
    <text evidence="1">Belongs to the enolase family.</text>
</comment>